<gene>
    <name evidence="9" type="primary">NME8</name>
    <name type="synonym">SPTRX2</name>
    <name type="synonym">TXNDC3</name>
</gene>
<organism>
    <name type="scientific">Homo sapiens</name>
    <name type="common">Human</name>
    <dbReference type="NCBI Taxonomy" id="9606"/>
    <lineage>
        <taxon>Eukaryota</taxon>
        <taxon>Metazoa</taxon>
        <taxon>Chordata</taxon>
        <taxon>Craniata</taxon>
        <taxon>Vertebrata</taxon>
        <taxon>Euteleostomi</taxon>
        <taxon>Mammalia</taxon>
        <taxon>Eutheria</taxon>
        <taxon>Euarchontoglires</taxon>
        <taxon>Primates</taxon>
        <taxon>Haplorrhini</taxon>
        <taxon>Catarrhini</taxon>
        <taxon>Hominidae</taxon>
        <taxon>Homo</taxon>
    </lineage>
</organism>
<proteinExistence type="evidence at protein level"/>
<feature type="chain" id="PRO_0000120156" description="Thioredoxin domain-containing protein 3">
    <location>
        <begin position="1"/>
        <end position="588"/>
    </location>
</feature>
<feature type="domain" description="Thioredoxin" evidence="1">
    <location>
        <begin position="2"/>
        <end position="119"/>
    </location>
</feature>
<feature type="region of interest" description="NDK 1" evidence="8">
    <location>
        <begin position="157"/>
        <end position="257"/>
    </location>
</feature>
<feature type="region of interest" description="Disordered" evidence="2">
    <location>
        <begin position="230"/>
        <end position="261"/>
    </location>
</feature>
<feature type="region of interest" description="NDK 2" evidence="8">
    <location>
        <begin position="315"/>
        <end position="455"/>
    </location>
</feature>
<feature type="region of interest" description="NDK 3" evidence="8">
    <location>
        <begin position="456"/>
        <end position="588"/>
    </location>
</feature>
<feature type="disulfide bond" description="Redox-active" evidence="1">
    <location>
        <begin position="39"/>
        <end position="42"/>
    </location>
</feature>
<feature type="sequence variant" id="VAR_032948" description="In dbSNP:rs2722372.">
    <original>R</original>
    <variation>K</variation>
    <location>
        <position position="43"/>
    </location>
</feature>
<feature type="sequence variant" id="VAR_022766" description="In dbSNP:rs10250905." evidence="4">
    <original>C</original>
    <variation>R</variation>
    <location>
        <position position="208"/>
    </location>
</feature>
<feature type="sequence variant" id="VAR_036171" description="In a breast cancer sample; somatic mutation." evidence="6">
    <original>I</original>
    <variation>T</variation>
    <location>
        <position position="289"/>
    </location>
</feature>
<feature type="sequence variant" id="VAR_061898" description="In dbSNP:rs56128139." evidence="4">
    <original>I</original>
    <variation>T</variation>
    <location>
        <position position="493"/>
    </location>
</feature>
<name>TXND3_HUMAN</name>
<dbReference type="EC" id="3.1.-.-" evidence="5"/>
<dbReference type="EMBL" id="AF202051">
    <property type="protein sequence ID" value="AAF20909.2"/>
    <property type="molecule type" value="mRNA"/>
</dbReference>
<dbReference type="EMBL" id="AF305596">
    <property type="protein sequence ID" value="AAN04258.1"/>
    <property type="molecule type" value="mRNA"/>
</dbReference>
<dbReference type="EMBL" id="AC018634">
    <property type="status" value="NOT_ANNOTATED_CDS"/>
    <property type="molecule type" value="Genomic_DNA"/>
</dbReference>
<dbReference type="EMBL" id="BC036816">
    <property type="protein sequence ID" value="AAH36816.1"/>
    <property type="molecule type" value="mRNA"/>
</dbReference>
<dbReference type="CCDS" id="CCDS5452.1"/>
<dbReference type="RefSeq" id="NP_057700.3">
    <property type="nucleotide sequence ID" value="NM_016616.4"/>
</dbReference>
<dbReference type="SMR" id="Q8N427"/>
<dbReference type="BioGRID" id="119465">
    <property type="interactions" value="13"/>
</dbReference>
<dbReference type="FunCoup" id="Q8N427">
    <property type="interactions" value="21"/>
</dbReference>
<dbReference type="IntAct" id="Q8N427">
    <property type="interactions" value="6"/>
</dbReference>
<dbReference type="STRING" id="9606.ENSP00000199447"/>
<dbReference type="iPTMnet" id="Q8N427"/>
<dbReference type="PhosphoSitePlus" id="Q8N427"/>
<dbReference type="BioMuta" id="NME8"/>
<dbReference type="DMDM" id="68566210"/>
<dbReference type="jPOST" id="Q8N427"/>
<dbReference type="MassIVE" id="Q8N427"/>
<dbReference type="PaxDb" id="9606-ENSP00000199447"/>
<dbReference type="PeptideAtlas" id="Q8N427"/>
<dbReference type="ProteomicsDB" id="71868"/>
<dbReference type="Antibodypedia" id="12974">
    <property type="antibodies" value="113 antibodies from 26 providers"/>
</dbReference>
<dbReference type="DNASU" id="51314"/>
<dbReference type="Ensembl" id="ENST00000199447.9">
    <property type="protein sequence ID" value="ENSP00000199447.4"/>
    <property type="gene ID" value="ENSG00000086288.12"/>
</dbReference>
<dbReference type="Ensembl" id="ENST00000440017.5">
    <property type="protein sequence ID" value="ENSP00000397063.1"/>
    <property type="gene ID" value="ENSG00000086288.12"/>
</dbReference>
<dbReference type="GeneID" id="51314"/>
<dbReference type="KEGG" id="hsa:51314"/>
<dbReference type="MANE-Select" id="ENST00000199447.9">
    <property type="protein sequence ID" value="ENSP00000199447.4"/>
    <property type="RefSeq nucleotide sequence ID" value="NM_016616.5"/>
    <property type="RefSeq protein sequence ID" value="NP_057700.3"/>
</dbReference>
<dbReference type="UCSC" id="uc003tfn.4">
    <property type="organism name" value="human"/>
</dbReference>
<dbReference type="AGR" id="HGNC:16473"/>
<dbReference type="CTD" id="51314"/>
<dbReference type="DisGeNET" id="51314"/>
<dbReference type="GeneCards" id="NME8"/>
<dbReference type="GeneReviews" id="NME8"/>
<dbReference type="HGNC" id="HGNC:16473">
    <property type="gene designation" value="NME8"/>
</dbReference>
<dbReference type="HPA" id="ENSG00000086288">
    <property type="expression patterns" value="Group enriched (bone marrow, testis)"/>
</dbReference>
<dbReference type="MalaCards" id="NME8"/>
<dbReference type="MIM" id="607421">
    <property type="type" value="gene"/>
</dbReference>
<dbReference type="MIM" id="610852">
    <property type="type" value="phenotype"/>
</dbReference>
<dbReference type="neXtProt" id="NX_Q8N427"/>
<dbReference type="OpenTargets" id="ENSG00000086288"/>
<dbReference type="Orphanet" id="244">
    <property type="disease" value="Primary ciliary dyskinesia"/>
</dbReference>
<dbReference type="PharmGKB" id="PA134925065"/>
<dbReference type="VEuPathDB" id="HostDB:ENSG00000086288"/>
<dbReference type="eggNOG" id="KOG0888">
    <property type="taxonomic scope" value="Eukaryota"/>
</dbReference>
<dbReference type="eggNOG" id="KOG0907">
    <property type="taxonomic scope" value="Eukaryota"/>
</dbReference>
<dbReference type="GeneTree" id="ENSGT00940000161182"/>
<dbReference type="HOGENOM" id="CLU_016708_0_0_1"/>
<dbReference type="InParanoid" id="Q8N427"/>
<dbReference type="OMA" id="ERQHVSQ"/>
<dbReference type="OrthoDB" id="10263751at2759"/>
<dbReference type="PAN-GO" id="Q8N427">
    <property type="GO annotations" value="5 GO annotations based on evolutionary models"/>
</dbReference>
<dbReference type="PhylomeDB" id="Q8N427"/>
<dbReference type="TreeFam" id="TF106374"/>
<dbReference type="PathwayCommons" id="Q8N427"/>
<dbReference type="SignaLink" id="Q8N427"/>
<dbReference type="BioGRID-ORCS" id="51314">
    <property type="hits" value="13 hits in 1137 CRISPR screens"/>
</dbReference>
<dbReference type="GeneWiki" id="TXNDC3"/>
<dbReference type="GenomeRNAi" id="51314"/>
<dbReference type="Pharos" id="Q8N427">
    <property type="development level" value="Tbio"/>
</dbReference>
<dbReference type="PRO" id="PR:Q8N427"/>
<dbReference type="Proteomes" id="UP000005640">
    <property type="component" value="Chromosome 7"/>
</dbReference>
<dbReference type="RNAct" id="Q8N427">
    <property type="molecule type" value="protein"/>
</dbReference>
<dbReference type="Bgee" id="ENSG00000086288">
    <property type="expression patterns" value="Expressed in granulocyte and 102 other cell types or tissues"/>
</dbReference>
<dbReference type="ExpressionAtlas" id="Q8N427">
    <property type="expression patterns" value="baseline and differential"/>
</dbReference>
<dbReference type="GO" id="GO:0005930">
    <property type="term" value="C:axoneme"/>
    <property type="evidence" value="ECO:0000250"/>
    <property type="project" value="ARUK-UCL"/>
</dbReference>
<dbReference type="GO" id="GO:0005737">
    <property type="term" value="C:cytoplasm"/>
    <property type="evidence" value="ECO:0000314"/>
    <property type="project" value="ARUK-UCL"/>
</dbReference>
<dbReference type="GO" id="GO:0005829">
    <property type="term" value="C:cytosol"/>
    <property type="evidence" value="ECO:0000314"/>
    <property type="project" value="HPA"/>
</dbReference>
<dbReference type="GO" id="GO:0016607">
    <property type="term" value="C:nuclear speck"/>
    <property type="evidence" value="ECO:0000314"/>
    <property type="project" value="HPA"/>
</dbReference>
<dbReference type="GO" id="GO:0005634">
    <property type="term" value="C:nucleus"/>
    <property type="evidence" value="ECO:0000314"/>
    <property type="project" value="ARUK-UCL"/>
</dbReference>
<dbReference type="GO" id="GO:0036157">
    <property type="term" value="C:outer dynein arm"/>
    <property type="evidence" value="ECO:0000315"/>
    <property type="project" value="SYSCILIA_CCNET"/>
</dbReference>
<dbReference type="GO" id="GO:0097598">
    <property type="term" value="C:sperm cytoplasmic droplet"/>
    <property type="evidence" value="ECO:0007669"/>
    <property type="project" value="Ensembl"/>
</dbReference>
<dbReference type="GO" id="GO:0097225">
    <property type="term" value="C:sperm midpiece"/>
    <property type="evidence" value="ECO:0000314"/>
    <property type="project" value="ARUK-UCL"/>
</dbReference>
<dbReference type="GO" id="GO:0097228">
    <property type="term" value="C:sperm principal piece"/>
    <property type="evidence" value="ECO:0000314"/>
    <property type="project" value="ARUK-UCL"/>
</dbReference>
<dbReference type="GO" id="GO:0008408">
    <property type="term" value="F:3'-5' exonuclease activity"/>
    <property type="evidence" value="ECO:0000314"/>
    <property type="project" value="UniProtKB"/>
</dbReference>
<dbReference type="GO" id="GO:0008017">
    <property type="term" value="F:microtubule binding"/>
    <property type="evidence" value="ECO:0000314"/>
    <property type="project" value="SYSCILIA_CCNET"/>
</dbReference>
<dbReference type="GO" id="GO:0030154">
    <property type="term" value="P:cell differentiation"/>
    <property type="evidence" value="ECO:0007669"/>
    <property type="project" value="UniProtKB-KW"/>
</dbReference>
<dbReference type="GO" id="GO:0034614">
    <property type="term" value="P:cellular response to reactive oxygen species"/>
    <property type="evidence" value="ECO:0007669"/>
    <property type="project" value="Ensembl"/>
</dbReference>
<dbReference type="GO" id="GO:0060271">
    <property type="term" value="P:cilium assembly"/>
    <property type="evidence" value="ECO:0000315"/>
    <property type="project" value="SYSCILIA_CCNET"/>
</dbReference>
<dbReference type="GO" id="GO:0030317">
    <property type="term" value="P:flagellated sperm motility"/>
    <property type="evidence" value="ECO:0000318"/>
    <property type="project" value="GO_Central"/>
</dbReference>
<dbReference type="GO" id="GO:0007283">
    <property type="term" value="P:spermatogenesis"/>
    <property type="evidence" value="ECO:0007669"/>
    <property type="project" value="UniProtKB-KW"/>
</dbReference>
<dbReference type="CDD" id="cd04416">
    <property type="entry name" value="NDPk_TX"/>
    <property type="match status" value="3"/>
</dbReference>
<dbReference type="CDD" id="cd02948">
    <property type="entry name" value="TRX_NDPK"/>
    <property type="match status" value="1"/>
</dbReference>
<dbReference type="FunFam" id="3.30.70.141:FF:000012">
    <property type="entry name" value="Thioredoxin domain-containing protein 3"/>
    <property type="match status" value="1"/>
</dbReference>
<dbReference type="FunFam" id="3.30.70.141:FF:000020">
    <property type="entry name" value="Thioredoxin domain-containing protein 3"/>
    <property type="match status" value="1"/>
</dbReference>
<dbReference type="FunFam" id="3.30.70.141:FF:000022">
    <property type="entry name" value="Thioredoxin domain-containing protein 3"/>
    <property type="match status" value="1"/>
</dbReference>
<dbReference type="FunFam" id="3.40.30.10:FF:000207">
    <property type="entry name" value="thioredoxin domain-containing protein 3"/>
    <property type="match status" value="1"/>
</dbReference>
<dbReference type="Gene3D" id="3.40.30.10">
    <property type="entry name" value="Glutaredoxin"/>
    <property type="match status" value="1"/>
</dbReference>
<dbReference type="Gene3D" id="3.30.70.141">
    <property type="entry name" value="Nucleoside diphosphate kinase-like domain"/>
    <property type="match status" value="3"/>
</dbReference>
<dbReference type="InterPro" id="IPR034907">
    <property type="entry name" value="NDK-like_dom"/>
</dbReference>
<dbReference type="InterPro" id="IPR036850">
    <property type="entry name" value="NDK-like_dom_sf"/>
</dbReference>
<dbReference type="InterPro" id="IPR036249">
    <property type="entry name" value="Thioredoxin-like_sf"/>
</dbReference>
<dbReference type="InterPro" id="IPR017937">
    <property type="entry name" value="Thioredoxin_CS"/>
</dbReference>
<dbReference type="InterPro" id="IPR013766">
    <property type="entry name" value="Thioredoxin_domain"/>
</dbReference>
<dbReference type="InterPro" id="IPR051766">
    <property type="entry name" value="TXND_domain-containing"/>
</dbReference>
<dbReference type="PANTHER" id="PTHR46135">
    <property type="entry name" value="NME/NM23 FAMILY MEMBER 8"/>
    <property type="match status" value="1"/>
</dbReference>
<dbReference type="PANTHER" id="PTHR46135:SF2">
    <property type="entry name" value="THIOREDOXIN DOMAIN-CONTAINING PROTEIN 3"/>
    <property type="match status" value="1"/>
</dbReference>
<dbReference type="Pfam" id="PF00334">
    <property type="entry name" value="NDK"/>
    <property type="match status" value="3"/>
</dbReference>
<dbReference type="Pfam" id="PF00085">
    <property type="entry name" value="Thioredoxin"/>
    <property type="match status" value="1"/>
</dbReference>
<dbReference type="SMART" id="SM00562">
    <property type="entry name" value="NDK"/>
    <property type="match status" value="2"/>
</dbReference>
<dbReference type="SUPFAM" id="SSF54919">
    <property type="entry name" value="Nucleoside diphosphate kinase, NDK"/>
    <property type="match status" value="3"/>
</dbReference>
<dbReference type="SUPFAM" id="SSF52833">
    <property type="entry name" value="Thioredoxin-like"/>
    <property type="match status" value="1"/>
</dbReference>
<dbReference type="PROSITE" id="PS51374">
    <property type="entry name" value="NDPK_LIKE"/>
    <property type="match status" value="3"/>
</dbReference>
<dbReference type="PROSITE" id="PS00194">
    <property type="entry name" value="THIOREDOXIN_1"/>
    <property type="match status" value="1"/>
</dbReference>
<dbReference type="PROSITE" id="PS51352">
    <property type="entry name" value="THIOREDOXIN_2"/>
    <property type="match status" value="1"/>
</dbReference>
<comment type="function">
    <text evidence="3 5">Probably required during the final stages of sperm tail maturation in the testis and/or epididymis, where extensive disulfide bonding of fibrous sheath (FS) proteins occurs. In vitro, it has neither nucleoside diphosphate kinase (NDPK) activity nor reducing activity on disulfide bonds (PubMed:11737268). Exhibits a 3'-5' exonuclease activity with a preference for single-stranded DNA, suggesting roles in DNA proofreading and repair (PubMed:16313181).</text>
</comment>
<comment type="subunit">
    <text evidence="3">Monomer.</text>
</comment>
<comment type="subcellular location">
    <subcellularLocation>
        <location evidence="3">Cytoplasm</location>
    </subcellularLocation>
</comment>
<comment type="tissue specificity">
    <text evidence="3">Testis-specific. Expressed only in primary spermatocytes and round spermatids.</text>
</comment>
<comment type="developmental stage">
    <text>Restricted to spermiogenesis, starting at the pachytene spermatocyte level and peaking at the round and elongating spermatid stage.</text>
</comment>
<comment type="domain">
    <text>Contains 3 inactive NDK domains that do not possess all residues considered to be crucial for the NDPK activity.</text>
</comment>
<comment type="disease" evidence="7">
    <disease id="DI-00931">
        <name>Ciliary dyskinesia, primary, 6</name>
        <acronym>CILD6</acronym>
        <description>A disorder characterized by abnormalities of motile cilia. Respiratory infections leading to chronic inflammation and bronchiectasis are recurrent, due to defects in the respiratory cilia; reduced fertility is often observed in male patients due to abnormalities of sperm tails. Half of the patients exhibit randomization of left-right body asymmetry and situs inversus, due to dysfunction of monocilia at the embryonic node. Primary ciliary dyskinesia associated with situs inversus is referred to as Kartagener syndrome.</description>
        <dbReference type="MIM" id="610852"/>
    </disease>
    <text>The disease is caused by variants affecting the gene represented in this entry.</text>
</comment>
<comment type="similarity">
    <text evidence="8">In the C-terminal section; belongs to the NDK family.</text>
</comment>
<reference key="1">
    <citation type="journal article" date="2000" name="J. Bioenerg. Biomembr.">
        <title>The human Nm23/nucleoside diphosphate kinases.</title>
        <authorList>
            <person name="Lacombe M.-L.L."/>
            <person name="Milon L."/>
            <person name="Munier A."/>
            <person name="Mehus J.G."/>
            <person name="Lambeth D.O."/>
        </authorList>
    </citation>
    <scope>NUCLEOTIDE SEQUENCE [MRNA]</scope>
</reference>
<reference key="2">
    <citation type="journal article" date="2001" name="Genes Cells">
        <title>Sptrx-2, a fusion protein composed of one thioredoxin and three tandemly repeated NDP-kinase domains is expressed in human testis germ cells.</title>
        <authorList>
            <person name="Sadek C.M."/>
            <person name="Damdimopoulos A.E."/>
            <person name="Pelto-Huikko M."/>
            <person name="Gustafsson J.-A."/>
            <person name="Spyrou G."/>
            <person name="Miranda-Vizuete A."/>
        </authorList>
    </citation>
    <scope>NUCLEOTIDE SEQUENCE [MRNA]</scope>
    <scope>SUBCELLULAR LOCATION</scope>
    <scope>SUBUNIT</scope>
    <scope>TISSUE SPECIFICITY</scope>
    <scope>LACK OF NUCLEOSIDE DIPHOSPHATE AND DISULFIDE REDUCTASE ACTIVITIES</scope>
</reference>
<reference key="3">
    <citation type="journal article" date="2003" name="Nature">
        <title>The DNA sequence of human chromosome 7.</title>
        <authorList>
            <person name="Hillier L.W."/>
            <person name="Fulton R.S."/>
            <person name="Fulton L.A."/>
            <person name="Graves T.A."/>
            <person name="Pepin K.H."/>
            <person name="Wagner-McPherson C."/>
            <person name="Layman D."/>
            <person name="Maas J."/>
            <person name="Jaeger S."/>
            <person name="Walker R."/>
            <person name="Wylie K."/>
            <person name="Sekhon M."/>
            <person name="Becker M.C."/>
            <person name="O'Laughlin M.D."/>
            <person name="Schaller M.E."/>
            <person name="Fewell G.A."/>
            <person name="Delehaunty K.D."/>
            <person name="Miner T.L."/>
            <person name="Nash W.E."/>
            <person name="Cordes M."/>
            <person name="Du H."/>
            <person name="Sun H."/>
            <person name="Edwards J."/>
            <person name="Bradshaw-Cordum H."/>
            <person name="Ali J."/>
            <person name="Andrews S."/>
            <person name="Isak A."/>
            <person name="Vanbrunt A."/>
            <person name="Nguyen C."/>
            <person name="Du F."/>
            <person name="Lamar B."/>
            <person name="Courtney L."/>
            <person name="Kalicki J."/>
            <person name="Ozersky P."/>
            <person name="Bielicki L."/>
            <person name="Scott K."/>
            <person name="Holmes A."/>
            <person name="Harkins R."/>
            <person name="Harris A."/>
            <person name="Strong C.M."/>
            <person name="Hou S."/>
            <person name="Tomlinson C."/>
            <person name="Dauphin-Kohlberg S."/>
            <person name="Kozlowicz-Reilly A."/>
            <person name="Leonard S."/>
            <person name="Rohlfing T."/>
            <person name="Rock S.M."/>
            <person name="Tin-Wollam A.-M."/>
            <person name="Abbott A."/>
            <person name="Minx P."/>
            <person name="Maupin R."/>
            <person name="Strowmatt C."/>
            <person name="Latreille P."/>
            <person name="Miller N."/>
            <person name="Johnson D."/>
            <person name="Murray J."/>
            <person name="Woessner J.P."/>
            <person name="Wendl M.C."/>
            <person name="Yang S.-P."/>
            <person name="Schultz B.R."/>
            <person name="Wallis J.W."/>
            <person name="Spieth J."/>
            <person name="Bieri T.A."/>
            <person name="Nelson J.O."/>
            <person name="Berkowicz N."/>
            <person name="Wohldmann P.E."/>
            <person name="Cook L.L."/>
            <person name="Hickenbotham M.T."/>
            <person name="Eldred J."/>
            <person name="Williams D."/>
            <person name="Bedell J.A."/>
            <person name="Mardis E.R."/>
            <person name="Clifton S.W."/>
            <person name="Chissoe S.L."/>
            <person name="Marra M.A."/>
            <person name="Raymond C."/>
            <person name="Haugen E."/>
            <person name="Gillett W."/>
            <person name="Zhou Y."/>
            <person name="James R."/>
            <person name="Phelps K."/>
            <person name="Iadanoto S."/>
            <person name="Bubb K."/>
            <person name="Simms E."/>
            <person name="Levy R."/>
            <person name="Clendenning J."/>
            <person name="Kaul R."/>
            <person name="Kent W.J."/>
            <person name="Furey T.S."/>
            <person name="Baertsch R.A."/>
            <person name="Brent M.R."/>
            <person name="Keibler E."/>
            <person name="Flicek P."/>
            <person name="Bork P."/>
            <person name="Suyama M."/>
            <person name="Bailey J.A."/>
            <person name="Portnoy M.E."/>
            <person name="Torrents D."/>
            <person name="Chinwalla A.T."/>
            <person name="Gish W.R."/>
            <person name="Eddy S.R."/>
            <person name="McPherson J.D."/>
            <person name="Olson M.V."/>
            <person name="Eichler E.E."/>
            <person name="Green E.D."/>
            <person name="Waterston R.H."/>
            <person name="Wilson R.K."/>
        </authorList>
    </citation>
    <scope>NUCLEOTIDE SEQUENCE [LARGE SCALE GENOMIC DNA]</scope>
</reference>
<reference key="4">
    <citation type="journal article" date="2004" name="Genome Res.">
        <title>The status, quality, and expansion of the NIH full-length cDNA project: the Mammalian Gene Collection (MGC).</title>
        <authorList>
            <consortium name="The MGC Project Team"/>
        </authorList>
    </citation>
    <scope>NUCLEOTIDE SEQUENCE [LARGE SCALE MRNA]</scope>
    <scope>VARIANTS ARG-208 AND THR-493</scope>
    <source>
        <tissue>Brain</tissue>
    </source>
</reference>
<reference key="5">
    <citation type="journal article" date="2005" name="Biochemistry">
        <title>Characterization of the 3' --&gt; 5' exonuclease activity found in human nucleoside diphosphate kinase 1 (NDK1) and several of its homologues.</title>
        <authorList>
            <person name="Yoon J.H."/>
            <person name="Singh P."/>
            <person name="Lee D.H."/>
            <person name="Qiu J."/>
            <person name="Cai S."/>
            <person name="O'Connor T.R."/>
            <person name="Chen Y."/>
            <person name="Shen B."/>
            <person name="Pfeifer G.P."/>
        </authorList>
    </citation>
    <scope>FUNCTION</scope>
    <scope>CATALYTIC ACTIVITY</scope>
</reference>
<reference key="6">
    <citation type="journal article" date="2007" name="Proc. Natl. Acad. Sci. U.S.A.">
        <title>A common variant in combination with a nonsense mutation in a member of the thioredoxin family causes primary ciliary dyskinesia.</title>
        <authorList>
            <person name="Duriez B."/>
            <person name="Duquesnoy P."/>
            <person name="Escudier E."/>
            <person name="Bridoux A.-M."/>
            <person name="Escalier D."/>
            <person name="Rayet I."/>
            <person name="Marcos E."/>
            <person name="Vojtek A.-M."/>
            <person name="Bercher J.-F."/>
            <person name="Amselem S."/>
        </authorList>
    </citation>
    <scope>INVOLVEMENT IN CILD6</scope>
</reference>
<reference key="7">
    <citation type="journal article" date="2006" name="Science">
        <title>The consensus coding sequences of human breast and colorectal cancers.</title>
        <authorList>
            <person name="Sjoeblom T."/>
            <person name="Jones S."/>
            <person name="Wood L.D."/>
            <person name="Parsons D.W."/>
            <person name="Lin J."/>
            <person name="Barber T.D."/>
            <person name="Mandelker D."/>
            <person name="Leary R.J."/>
            <person name="Ptak J."/>
            <person name="Silliman N."/>
            <person name="Szabo S."/>
            <person name="Buckhaults P."/>
            <person name="Farrell C."/>
            <person name="Meeh P."/>
            <person name="Markowitz S.D."/>
            <person name="Willis J."/>
            <person name="Dawson D."/>
            <person name="Willson J.K.V."/>
            <person name="Gazdar A.F."/>
            <person name="Hartigan J."/>
            <person name="Wu L."/>
            <person name="Liu C."/>
            <person name="Parmigiani G."/>
            <person name="Park B.H."/>
            <person name="Bachman K.E."/>
            <person name="Papadopoulos N."/>
            <person name="Vogelstein B."/>
            <person name="Kinzler K.W."/>
            <person name="Velculescu V.E."/>
        </authorList>
    </citation>
    <scope>VARIANT [LARGE SCALE ANALYSIS] THR-289</scope>
</reference>
<evidence type="ECO:0000255" key="1">
    <source>
        <dbReference type="PROSITE-ProRule" id="PRU00691"/>
    </source>
</evidence>
<evidence type="ECO:0000256" key="2">
    <source>
        <dbReference type="SAM" id="MobiDB-lite"/>
    </source>
</evidence>
<evidence type="ECO:0000269" key="3">
    <source>
    </source>
</evidence>
<evidence type="ECO:0000269" key="4">
    <source>
    </source>
</evidence>
<evidence type="ECO:0000269" key="5">
    <source>
    </source>
</evidence>
<evidence type="ECO:0000269" key="6">
    <source>
    </source>
</evidence>
<evidence type="ECO:0000269" key="7">
    <source>
    </source>
</evidence>
<evidence type="ECO:0000305" key="8"/>
<evidence type="ECO:0000312" key="9">
    <source>
        <dbReference type="HGNC" id="HGNC:16473"/>
    </source>
</evidence>
<accession>Q8N427</accession>
<accession>Q9NZH1</accession>
<protein>
    <recommendedName>
        <fullName>Thioredoxin domain-containing protein 3</fullName>
    </recommendedName>
    <alternativeName>
        <fullName evidence="8">3'-5' exonuclease NME8</fullName>
        <ecNumber evidence="5">3.1.-.-</ecNumber>
    </alternativeName>
    <alternativeName>
        <fullName>NM23-H8</fullName>
    </alternativeName>
    <alternativeName>
        <fullName>NME/NM23 family member 8</fullName>
    </alternativeName>
    <alternativeName>
        <fullName>Spermatid-specific thioredoxin-2</fullName>
        <shortName>Sptrx-2</shortName>
    </alternativeName>
</protein>
<keyword id="KW-1186">Ciliopathy</keyword>
<keyword id="KW-0963">Cytoplasm</keyword>
<keyword id="KW-0217">Developmental protein</keyword>
<keyword id="KW-0221">Differentiation</keyword>
<keyword id="KW-1015">Disulfide bond</keyword>
<keyword id="KW-0378">Hydrolase</keyword>
<keyword id="KW-0990">Primary ciliary dyskinesia</keyword>
<keyword id="KW-1267">Proteomics identification</keyword>
<keyword id="KW-1185">Reference proteome</keyword>
<keyword id="KW-0677">Repeat</keyword>
<keyword id="KW-0744">Spermatogenesis</keyword>
<sequence>MASKKREVQLQTVINNQSLWDEMLQNKGLTVIDVYQAWCGPCRAMQPLFRKLKNELNEDEILHFAVAEADNIVTLQPFRDKCEPVFLFSVNGKIIEKIQGANAPLVNKKVINLIDEERKIAAGEMARPQYPEIPLVDSDSEVSEESPCESVQELYSIAIIKPDAVISKKVLEIKRKITKAGFIIEAEHKTVLTEEQVVNFYSRIADQCDFEEFVSFMTSGLSYILVVSQGSKHNPPSEETEPQTDTEPNERSEDQPEVEAQVTPGMMKNKQDSLQEYLERQHLAQLCDIEEDAANVAKFMDAFFPDFKKMKSMKLEKTLALLRPNLFHERKDDVLRIIKDEDFKILEQRQVVLSEKEAQALCKEYENEDYFNKLIENMTSGPSLALVLLRDNGLQYWKQLLGPRTVEEAIEYFPESLCAQFAMDSLPVNQLYGSDSLETAEREIQHFFPLQSTLGLIKPHATSEQREQILKIVKEAGFDLTQVKKMFLTPEQIEKIYPKVTGKDFYKDLLEMLSVGPSMVMILTKWNAVAEWRRLMGPTDPEEAKLLSPDSIRAQFGISKLKNIVHGASNAYEAKEVVNRLFEDPEEN</sequence>